<sequence length="427" mass="47204">MSTSFENKATNRGVITFTISQDKIKPALDQAFNKIKKDLNAPGFRKGHMPRPVFDQRFGEEVLYEEALNIVLPAAYEGAVAELELDVVAQPKIDVVSMEKCQEWTLTAEVVTKPEVKLGDYKDLTVEVEASKEVTDEEVDAKVERERNNLAELVVKEEAAVEGDTVVIDFVGSVDGVEFDGGKGDNFSLELGSGQFIPGFEEQLVGAKAGDTVEVNVTFPENYQAEDLAGKAAKFVATVHEVKAKEVPELDDELAKDIDEEVETLDELKAKYRKELEASKEAAYDDALEGAAIELAVENAEIVELPEEMVHDEVHRSVNEFMASMQRQGISPDMYFQLTGTSQEDLHKQHEAEADKRVKTNLVIEAIAKAEGFEASDDEIEKEINDLAAEYSMPVEQVRSLLSADMLKHDIVMKKAVEVITSSAKAK</sequence>
<dbReference type="EC" id="5.2.1.8" evidence="1"/>
<dbReference type="EMBL" id="FM204883">
    <property type="protein sequence ID" value="CAW95175.1"/>
    <property type="molecule type" value="Genomic_DNA"/>
</dbReference>
<dbReference type="RefSeq" id="WP_012680109.1">
    <property type="nucleotide sequence ID" value="NC_012471.1"/>
</dbReference>
<dbReference type="SMR" id="C0M8K8"/>
<dbReference type="KEGG" id="seu:SEQ_1947"/>
<dbReference type="HOGENOM" id="CLU_033058_3_2_9"/>
<dbReference type="OrthoDB" id="9767721at2"/>
<dbReference type="Proteomes" id="UP000001365">
    <property type="component" value="Chromosome"/>
</dbReference>
<dbReference type="GO" id="GO:0005737">
    <property type="term" value="C:cytoplasm"/>
    <property type="evidence" value="ECO:0007669"/>
    <property type="project" value="UniProtKB-SubCell"/>
</dbReference>
<dbReference type="GO" id="GO:0003755">
    <property type="term" value="F:peptidyl-prolyl cis-trans isomerase activity"/>
    <property type="evidence" value="ECO:0007669"/>
    <property type="project" value="UniProtKB-UniRule"/>
</dbReference>
<dbReference type="GO" id="GO:0044183">
    <property type="term" value="F:protein folding chaperone"/>
    <property type="evidence" value="ECO:0007669"/>
    <property type="project" value="TreeGrafter"/>
</dbReference>
<dbReference type="GO" id="GO:0043022">
    <property type="term" value="F:ribosome binding"/>
    <property type="evidence" value="ECO:0007669"/>
    <property type="project" value="TreeGrafter"/>
</dbReference>
<dbReference type="GO" id="GO:0051083">
    <property type="term" value="P:'de novo' cotranslational protein folding"/>
    <property type="evidence" value="ECO:0007669"/>
    <property type="project" value="TreeGrafter"/>
</dbReference>
<dbReference type="GO" id="GO:0051301">
    <property type="term" value="P:cell division"/>
    <property type="evidence" value="ECO:0007669"/>
    <property type="project" value="UniProtKB-KW"/>
</dbReference>
<dbReference type="GO" id="GO:0061077">
    <property type="term" value="P:chaperone-mediated protein folding"/>
    <property type="evidence" value="ECO:0007669"/>
    <property type="project" value="TreeGrafter"/>
</dbReference>
<dbReference type="GO" id="GO:0015031">
    <property type="term" value="P:protein transport"/>
    <property type="evidence" value="ECO:0007669"/>
    <property type="project" value="UniProtKB-UniRule"/>
</dbReference>
<dbReference type="GO" id="GO:0043335">
    <property type="term" value="P:protein unfolding"/>
    <property type="evidence" value="ECO:0007669"/>
    <property type="project" value="TreeGrafter"/>
</dbReference>
<dbReference type="FunFam" id="3.10.50.40:FF:000001">
    <property type="entry name" value="Trigger factor"/>
    <property type="match status" value="1"/>
</dbReference>
<dbReference type="Gene3D" id="3.10.50.40">
    <property type="match status" value="1"/>
</dbReference>
<dbReference type="Gene3D" id="3.30.70.1050">
    <property type="entry name" value="Trigger factor ribosome-binding domain"/>
    <property type="match status" value="1"/>
</dbReference>
<dbReference type="Gene3D" id="1.10.3120.10">
    <property type="entry name" value="Trigger factor, C-terminal domain"/>
    <property type="match status" value="1"/>
</dbReference>
<dbReference type="HAMAP" id="MF_00303">
    <property type="entry name" value="Trigger_factor_Tig"/>
    <property type="match status" value="1"/>
</dbReference>
<dbReference type="InterPro" id="IPR046357">
    <property type="entry name" value="PPIase_dom_sf"/>
</dbReference>
<dbReference type="InterPro" id="IPR001179">
    <property type="entry name" value="PPIase_FKBP_dom"/>
</dbReference>
<dbReference type="InterPro" id="IPR005215">
    <property type="entry name" value="Trig_fac"/>
</dbReference>
<dbReference type="InterPro" id="IPR008880">
    <property type="entry name" value="Trigger_fac_C"/>
</dbReference>
<dbReference type="InterPro" id="IPR037041">
    <property type="entry name" value="Trigger_fac_C_sf"/>
</dbReference>
<dbReference type="InterPro" id="IPR008881">
    <property type="entry name" value="Trigger_fac_ribosome-bd_bac"/>
</dbReference>
<dbReference type="InterPro" id="IPR036611">
    <property type="entry name" value="Trigger_fac_ribosome-bd_sf"/>
</dbReference>
<dbReference type="InterPro" id="IPR027304">
    <property type="entry name" value="Trigger_fact/SurA_dom_sf"/>
</dbReference>
<dbReference type="NCBIfam" id="TIGR00115">
    <property type="entry name" value="tig"/>
    <property type="match status" value="1"/>
</dbReference>
<dbReference type="PANTHER" id="PTHR30560">
    <property type="entry name" value="TRIGGER FACTOR CHAPERONE AND PEPTIDYL-PROLYL CIS/TRANS ISOMERASE"/>
    <property type="match status" value="1"/>
</dbReference>
<dbReference type="PANTHER" id="PTHR30560:SF3">
    <property type="entry name" value="TRIGGER FACTOR-LIKE PROTEIN TIG, CHLOROPLASTIC"/>
    <property type="match status" value="1"/>
</dbReference>
<dbReference type="Pfam" id="PF00254">
    <property type="entry name" value="FKBP_C"/>
    <property type="match status" value="1"/>
</dbReference>
<dbReference type="Pfam" id="PF05698">
    <property type="entry name" value="Trigger_C"/>
    <property type="match status" value="1"/>
</dbReference>
<dbReference type="Pfam" id="PF05697">
    <property type="entry name" value="Trigger_N"/>
    <property type="match status" value="1"/>
</dbReference>
<dbReference type="PIRSF" id="PIRSF003095">
    <property type="entry name" value="Trigger_factor"/>
    <property type="match status" value="1"/>
</dbReference>
<dbReference type="SUPFAM" id="SSF54534">
    <property type="entry name" value="FKBP-like"/>
    <property type="match status" value="1"/>
</dbReference>
<dbReference type="SUPFAM" id="SSF109998">
    <property type="entry name" value="Triger factor/SurA peptide-binding domain-like"/>
    <property type="match status" value="1"/>
</dbReference>
<dbReference type="SUPFAM" id="SSF102735">
    <property type="entry name" value="Trigger factor ribosome-binding domain"/>
    <property type="match status" value="1"/>
</dbReference>
<dbReference type="PROSITE" id="PS50059">
    <property type="entry name" value="FKBP_PPIASE"/>
    <property type="match status" value="1"/>
</dbReference>
<name>TIG_STRE4</name>
<keyword id="KW-0131">Cell cycle</keyword>
<keyword id="KW-0132">Cell division</keyword>
<keyword id="KW-0143">Chaperone</keyword>
<keyword id="KW-0963">Cytoplasm</keyword>
<keyword id="KW-0413">Isomerase</keyword>
<keyword id="KW-0697">Rotamase</keyword>
<feature type="chain" id="PRO_1000198177" description="Trigger factor">
    <location>
        <begin position="1"/>
        <end position="427"/>
    </location>
</feature>
<feature type="domain" description="PPIase FKBP-type" evidence="1">
    <location>
        <begin position="163"/>
        <end position="248"/>
    </location>
</feature>
<accession>C0M8K8</accession>
<protein>
    <recommendedName>
        <fullName evidence="1">Trigger factor</fullName>
        <shortName evidence="1">TF</shortName>
        <ecNumber evidence="1">5.2.1.8</ecNumber>
    </recommendedName>
    <alternativeName>
        <fullName evidence="1">PPIase</fullName>
    </alternativeName>
</protein>
<reference key="1">
    <citation type="journal article" date="2009" name="PLoS Pathog.">
        <title>Genomic evidence for the evolution of Streptococcus equi: host restriction, increased virulence, and genetic exchange with human pathogens.</title>
        <authorList>
            <person name="Holden M.T.G."/>
            <person name="Heather Z."/>
            <person name="Paillot R."/>
            <person name="Steward K.F."/>
            <person name="Webb K."/>
            <person name="Ainslie F."/>
            <person name="Jourdan T."/>
            <person name="Bason N.C."/>
            <person name="Holroyd N.E."/>
            <person name="Mungall K."/>
            <person name="Quail M.A."/>
            <person name="Sanders M."/>
            <person name="Simmonds M."/>
            <person name="Willey D."/>
            <person name="Brooks K."/>
            <person name="Aanensen D.M."/>
            <person name="Spratt B.G."/>
            <person name="Jolley K.A."/>
            <person name="Maiden M.C.J."/>
            <person name="Kehoe M."/>
            <person name="Chanter N."/>
            <person name="Bentley S.D."/>
            <person name="Robinson C."/>
            <person name="Maskell D.J."/>
            <person name="Parkhill J."/>
            <person name="Waller A.S."/>
        </authorList>
    </citation>
    <scope>NUCLEOTIDE SEQUENCE [LARGE SCALE GENOMIC DNA]</scope>
    <source>
        <strain>4047</strain>
    </source>
</reference>
<evidence type="ECO:0000255" key="1">
    <source>
        <dbReference type="HAMAP-Rule" id="MF_00303"/>
    </source>
</evidence>
<proteinExistence type="inferred from homology"/>
<organism>
    <name type="scientific">Streptococcus equi subsp. equi (strain 4047)</name>
    <dbReference type="NCBI Taxonomy" id="553482"/>
    <lineage>
        <taxon>Bacteria</taxon>
        <taxon>Bacillati</taxon>
        <taxon>Bacillota</taxon>
        <taxon>Bacilli</taxon>
        <taxon>Lactobacillales</taxon>
        <taxon>Streptococcaceae</taxon>
        <taxon>Streptococcus</taxon>
    </lineage>
</organism>
<comment type="function">
    <text evidence="1">Involved in protein export. Acts as a chaperone by maintaining the newly synthesized protein in an open conformation. Functions as a peptidyl-prolyl cis-trans isomerase.</text>
</comment>
<comment type="catalytic activity">
    <reaction evidence="1">
        <text>[protein]-peptidylproline (omega=180) = [protein]-peptidylproline (omega=0)</text>
        <dbReference type="Rhea" id="RHEA:16237"/>
        <dbReference type="Rhea" id="RHEA-COMP:10747"/>
        <dbReference type="Rhea" id="RHEA-COMP:10748"/>
        <dbReference type="ChEBI" id="CHEBI:83833"/>
        <dbReference type="ChEBI" id="CHEBI:83834"/>
        <dbReference type="EC" id="5.2.1.8"/>
    </reaction>
</comment>
<comment type="subcellular location">
    <subcellularLocation>
        <location>Cytoplasm</location>
    </subcellularLocation>
    <text evidence="1">About half TF is bound to the ribosome near the polypeptide exit tunnel while the other half is free in the cytoplasm.</text>
</comment>
<comment type="domain">
    <text evidence="1">Consists of 3 domains; the N-terminus binds the ribosome, the middle domain has PPIase activity, while the C-terminus has intrinsic chaperone activity on its own.</text>
</comment>
<comment type="similarity">
    <text evidence="1">Belongs to the FKBP-type PPIase family. Tig subfamily.</text>
</comment>
<gene>
    <name evidence="1" type="primary">tig</name>
    <name type="ordered locus">SEQ_1947</name>
</gene>